<feature type="chain" id="PRO_0000302117" description="U8-ctenitoxin-Co1a">
    <location>
        <begin position="1"/>
        <end position="31" status="greater than"/>
    </location>
</feature>
<feature type="disulfide bond" evidence="3">
    <location>
        <begin position="4"/>
        <end position="18"/>
    </location>
</feature>
<feature type="disulfide bond" evidence="3">
    <location>
        <begin position="11"/>
        <end position="24"/>
    </location>
</feature>
<feature type="disulfide bond" evidence="3">
    <location>
        <begin position="15"/>
        <end status="unknown"/>
    </location>
</feature>
<feature type="disulfide bond" evidence="3">
    <location>
        <begin position="17"/>
        <end status="unknown"/>
    </location>
</feature>
<feature type="non-terminal residue">
    <location>
        <position position="31"/>
    </location>
</feature>
<evidence type="ECO:0000250" key="1"/>
<evidence type="ECO:0000269" key="2">
    <source ref="1"/>
</evidence>
<evidence type="ECO:0000305" key="3"/>
<proteinExistence type="evidence at protein level"/>
<protein>
    <recommendedName>
        <fullName>U8-ctenitoxin-Co1a</fullName>
        <shortName>U8-CNTX-Co1a</shortName>
    </recommendedName>
    <alternativeName>
        <fullName>Neurotoxin Oc F40-6</fullName>
    </alternativeName>
</protein>
<accession>P85275</accession>
<dbReference type="ArachnoServer" id="AS000316">
    <property type="toxin name" value="U8-ctenitoxin-Co1a"/>
</dbReference>
<dbReference type="GO" id="GO:0005576">
    <property type="term" value="C:extracellular region"/>
    <property type="evidence" value="ECO:0007669"/>
    <property type="project" value="UniProtKB-SubCell"/>
</dbReference>
<dbReference type="GO" id="GO:0017080">
    <property type="term" value="F:sodium channel regulator activity"/>
    <property type="evidence" value="ECO:0007669"/>
    <property type="project" value="UniProtKB-KW"/>
</dbReference>
<dbReference type="GO" id="GO:0090729">
    <property type="term" value="F:toxin activity"/>
    <property type="evidence" value="ECO:0007669"/>
    <property type="project" value="UniProtKB-KW"/>
</dbReference>
<dbReference type="InterPro" id="IPR035285">
    <property type="entry name" value="CNTX"/>
</dbReference>
<dbReference type="Pfam" id="PF17492">
    <property type="entry name" value="D_CNTX"/>
    <property type="match status" value="1"/>
</dbReference>
<sequence length="31" mass="3241">DGKCAGQDKPCKNSCDCCGARGECVYTGYXP</sequence>
<comment type="function">
    <text evidence="1">Blocks voltage-gated sodium channels (Nav).</text>
</comment>
<comment type="subcellular location">
    <subcellularLocation>
        <location evidence="2">Secreted</location>
    </subcellularLocation>
</comment>
<comment type="tissue specificity">
    <text evidence="2">Expressed by the venom gland.</text>
</comment>
<comment type="domain">
    <text evidence="3">The presence of a 'disulfide through disulfide knot' structurally defines this protein as a knottin.</text>
</comment>
<comment type="mass spectrometry" mass="5818.4" error="0.3" method="Electrospray" evidence="2"/>
<comment type="similarity">
    <text evidence="3">Belongs to the neurotoxin 03 (Tx2) family. 06 subfamily.</text>
</comment>
<keyword id="KW-0903">Direct protein sequencing</keyword>
<keyword id="KW-1015">Disulfide bond</keyword>
<keyword id="KW-0872">Ion channel impairing toxin</keyword>
<keyword id="KW-0960">Knottin</keyword>
<keyword id="KW-0528">Neurotoxin</keyword>
<keyword id="KW-0964">Secreted</keyword>
<keyword id="KW-0800">Toxin</keyword>
<keyword id="KW-0738">Voltage-gated sodium channel impairing toxin</keyword>
<name>TX36C_CTEON</name>
<reference evidence="3" key="1">
    <citation type="submission" date="2007-07" db="UniProtKB">
        <authorList>
            <person name="Borges M.H."/>
            <person name="Oliveira C.F.B."/>
            <person name="Goncalves J.M."/>
            <person name="Rates B."/>
            <person name="Santos D.M."/>
            <person name="Pimenta A.M.C."/>
            <person name="Cordeiro M.N."/>
            <person name="Richardson M."/>
        </authorList>
    </citation>
    <scope>PROTEIN SEQUENCE</scope>
    <scope>SUBCELLULAR LOCATION</scope>
    <scope>TISSUE SPECIFICITY</scope>
    <scope>MASS SPECTROMETRY</scope>
    <source>
        <tissue>Venom</tissue>
    </source>
</reference>
<organism>
    <name type="scientific">Ctenus ornatus</name>
    <name type="common">Brazilian spider</name>
    <name type="synonym">Oligoctenus ornatus</name>
    <dbReference type="NCBI Taxonomy" id="406443"/>
    <lineage>
        <taxon>Eukaryota</taxon>
        <taxon>Metazoa</taxon>
        <taxon>Ecdysozoa</taxon>
        <taxon>Arthropoda</taxon>
        <taxon>Chelicerata</taxon>
        <taxon>Arachnida</taxon>
        <taxon>Araneae</taxon>
        <taxon>Araneomorphae</taxon>
        <taxon>Entelegynae</taxon>
        <taxon>Lycosoidea</taxon>
        <taxon>Ctenidae</taxon>
        <taxon>Oligoctenus</taxon>
    </lineage>
</organism>